<evidence type="ECO:0000305" key="1"/>
<proteinExistence type="predicted"/>
<name>YCEO_SHIFL</name>
<protein>
    <recommendedName>
        <fullName>Uncharacterized protein YceO</fullName>
    </recommendedName>
</protein>
<keyword id="KW-1185">Reference proteome</keyword>
<comment type="sequence caution" evidence="1">
    <conflict type="erroneous initiation">
        <sequence resource="EMBL-CDS" id="AAN42687"/>
    </conflict>
    <text>Truncated N-terminus.</text>
</comment>
<comment type="sequence caution" evidence="1">
    <conflict type="erroneous initiation">
        <sequence resource="EMBL-CDS" id="AAP16573"/>
    </conflict>
    <text>Truncated N-terminus.</text>
</comment>
<accession>P64444</accession>
<accession>P75926</accession>
<feature type="chain" id="PRO_0000168822" description="Uncharacterized protein YceO">
    <location>
        <begin position="1"/>
        <end position="46"/>
    </location>
</feature>
<gene>
    <name type="primary">yceO</name>
    <name type="ordered locus">SF1065</name>
    <name type="ordered locus">S1142</name>
</gene>
<sequence length="46" mass="5897">MRPFLQEYLMRRLLHYLINNIREHLMLYLFLWGLLAIMDLIYVFYF</sequence>
<organism>
    <name type="scientific">Shigella flexneri</name>
    <dbReference type="NCBI Taxonomy" id="623"/>
    <lineage>
        <taxon>Bacteria</taxon>
        <taxon>Pseudomonadati</taxon>
        <taxon>Pseudomonadota</taxon>
        <taxon>Gammaproteobacteria</taxon>
        <taxon>Enterobacterales</taxon>
        <taxon>Enterobacteriaceae</taxon>
        <taxon>Shigella</taxon>
    </lineage>
</organism>
<reference key="1">
    <citation type="journal article" date="2002" name="Nucleic Acids Res.">
        <title>Genome sequence of Shigella flexneri 2a: insights into pathogenicity through comparison with genomes of Escherichia coli K12 and O157.</title>
        <authorList>
            <person name="Jin Q."/>
            <person name="Yuan Z."/>
            <person name="Xu J."/>
            <person name="Wang Y."/>
            <person name="Shen Y."/>
            <person name="Lu W."/>
            <person name="Wang J."/>
            <person name="Liu H."/>
            <person name="Yang J."/>
            <person name="Yang F."/>
            <person name="Zhang X."/>
            <person name="Zhang J."/>
            <person name="Yang G."/>
            <person name="Wu H."/>
            <person name="Qu D."/>
            <person name="Dong J."/>
            <person name="Sun L."/>
            <person name="Xue Y."/>
            <person name="Zhao A."/>
            <person name="Gao Y."/>
            <person name="Zhu J."/>
            <person name="Kan B."/>
            <person name="Ding K."/>
            <person name="Chen S."/>
            <person name="Cheng H."/>
            <person name="Yao Z."/>
            <person name="He B."/>
            <person name="Chen R."/>
            <person name="Ma D."/>
            <person name="Qiang B."/>
            <person name="Wen Y."/>
            <person name="Hou Y."/>
            <person name="Yu J."/>
        </authorList>
    </citation>
    <scope>NUCLEOTIDE SEQUENCE [LARGE SCALE GENOMIC DNA]</scope>
    <source>
        <strain>301 / Serotype 2a</strain>
    </source>
</reference>
<reference key="2">
    <citation type="journal article" date="2003" name="Infect. Immun.">
        <title>Complete genome sequence and comparative genomics of Shigella flexneri serotype 2a strain 2457T.</title>
        <authorList>
            <person name="Wei J."/>
            <person name="Goldberg M.B."/>
            <person name="Burland V."/>
            <person name="Venkatesan M.M."/>
            <person name="Deng W."/>
            <person name="Fournier G."/>
            <person name="Mayhew G.F."/>
            <person name="Plunkett G. III"/>
            <person name="Rose D.J."/>
            <person name="Darling A."/>
            <person name="Mau B."/>
            <person name="Perna N.T."/>
            <person name="Payne S.M."/>
            <person name="Runyen-Janecky L.J."/>
            <person name="Zhou S."/>
            <person name="Schwartz D.C."/>
            <person name="Blattner F.R."/>
        </authorList>
    </citation>
    <scope>NUCLEOTIDE SEQUENCE [LARGE SCALE GENOMIC DNA]</scope>
    <source>
        <strain>ATCC 700930 / 2457T / Serotype 2a</strain>
    </source>
</reference>
<dbReference type="EMBL" id="AE005674">
    <property type="protein sequence ID" value="AAN42687.2"/>
    <property type="status" value="ALT_INIT"/>
    <property type="molecule type" value="Genomic_DNA"/>
</dbReference>
<dbReference type="EMBL" id="AE014073">
    <property type="protein sequence ID" value="AAP16573.1"/>
    <property type="status" value="ALT_INIT"/>
    <property type="molecule type" value="Genomic_DNA"/>
</dbReference>
<dbReference type="RefSeq" id="NP_706980.2">
    <property type="nucleotide sequence ID" value="NC_004337.2"/>
</dbReference>
<dbReference type="STRING" id="198214.SF1065"/>
<dbReference type="PaxDb" id="198214-SF1065"/>
<dbReference type="GeneID" id="1024048"/>
<dbReference type="KEGG" id="sfl:SF1065"/>
<dbReference type="KEGG" id="sfx:S1142"/>
<dbReference type="PATRIC" id="fig|198214.7.peg.1247"/>
<dbReference type="HOGENOM" id="CLU_212603_0_0_6"/>
<dbReference type="Proteomes" id="UP000001006">
    <property type="component" value="Chromosome"/>
</dbReference>
<dbReference type="Proteomes" id="UP000002673">
    <property type="component" value="Chromosome"/>
</dbReference>
<dbReference type="InterPro" id="IPR024494">
    <property type="entry name" value="DUF2770"/>
</dbReference>
<dbReference type="Pfam" id="PF10968">
    <property type="entry name" value="DUF2770"/>
    <property type="match status" value="1"/>
</dbReference>